<accession>Q57K04</accession>
<keyword id="KW-0408">Iron</keyword>
<dbReference type="EMBL" id="AE017220">
    <property type="protein sequence ID" value="AAX66958.1"/>
    <property type="molecule type" value="Genomic_DNA"/>
</dbReference>
<dbReference type="RefSeq" id="WP_000091706.1">
    <property type="nucleotide sequence ID" value="NC_006905.1"/>
</dbReference>
<dbReference type="SMR" id="Q57K04"/>
<dbReference type="KEGG" id="sec:SCH_3052"/>
<dbReference type="HOGENOM" id="CLU_170994_0_0_6"/>
<dbReference type="Proteomes" id="UP000000538">
    <property type="component" value="Chromosome"/>
</dbReference>
<dbReference type="GO" id="GO:0005829">
    <property type="term" value="C:cytosol"/>
    <property type="evidence" value="ECO:0007669"/>
    <property type="project" value="TreeGrafter"/>
</dbReference>
<dbReference type="GO" id="GO:0005506">
    <property type="term" value="F:iron ion binding"/>
    <property type="evidence" value="ECO:0007669"/>
    <property type="project" value="UniProtKB-UniRule"/>
</dbReference>
<dbReference type="GO" id="GO:0034599">
    <property type="term" value="P:cellular response to oxidative stress"/>
    <property type="evidence" value="ECO:0007669"/>
    <property type="project" value="TreeGrafter"/>
</dbReference>
<dbReference type="FunFam" id="1.10.3880.10:FF:000001">
    <property type="entry name" value="Probable Fe(2+)-trafficking protein"/>
    <property type="match status" value="1"/>
</dbReference>
<dbReference type="Gene3D" id="1.10.3880.10">
    <property type="entry name" value="Fe(II) trafficking protein YggX"/>
    <property type="match status" value="1"/>
</dbReference>
<dbReference type="HAMAP" id="MF_00686">
    <property type="entry name" value="Fe_traffic_YggX"/>
    <property type="match status" value="1"/>
</dbReference>
<dbReference type="InterPro" id="IPR007457">
    <property type="entry name" value="Fe_traffick_prot_YggX"/>
</dbReference>
<dbReference type="InterPro" id="IPR036766">
    <property type="entry name" value="Fe_traffick_prot_YggX_sf"/>
</dbReference>
<dbReference type="NCBIfam" id="NF003817">
    <property type="entry name" value="PRK05408.1"/>
    <property type="match status" value="1"/>
</dbReference>
<dbReference type="PANTHER" id="PTHR36965">
    <property type="entry name" value="FE(2+)-TRAFFICKING PROTEIN-RELATED"/>
    <property type="match status" value="1"/>
</dbReference>
<dbReference type="PANTHER" id="PTHR36965:SF1">
    <property type="entry name" value="FE(2+)-TRAFFICKING PROTEIN-RELATED"/>
    <property type="match status" value="1"/>
</dbReference>
<dbReference type="Pfam" id="PF04362">
    <property type="entry name" value="Iron_traffic"/>
    <property type="match status" value="1"/>
</dbReference>
<dbReference type="PIRSF" id="PIRSF029827">
    <property type="entry name" value="Fe_traffic_YggX"/>
    <property type="match status" value="1"/>
</dbReference>
<dbReference type="SUPFAM" id="SSF111148">
    <property type="entry name" value="YggX-like"/>
    <property type="match status" value="1"/>
</dbReference>
<name>FETP_SALCH</name>
<gene>
    <name evidence="2" type="primary">yggX</name>
    <name type="ordered locus">SCH_3052</name>
</gene>
<sequence length="91" mass="10899">MSRTIFCTYLQRDAEGQDFQLYPGELGKRIYNEISKDAWAQWQHKQTMLINEKKLNMMNAEHRKLLEQEMVSFLFEGKDVHIEGYTPEDKK</sequence>
<reference key="1">
    <citation type="journal article" date="2005" name="Nucleic Acids Res.">
        <title>The genome sequence of Salmonella enterica serovar Choleraesuis, a highly invasive and resistant zoonotic pathogen.</title>
        <authorList>
            <person name="Chiu C.-H."/>
            <person name="Tang P."/>
            <person name="Chu C."/>
            <person name="Hu S."/>
            <person name="Bao Q."/>
            <person name="Yu J."/>
            <person name="Chou Y.-Y."/>
            <person name="Wang H.-S."/>
            <person name="Lee Y.-S."/>
        </authorList>
    </citation>
    <scope>NUCLEOTIDE SEQUENCE [LARGE SCALE GENOMIC DNA]</scope>
    <source>
        <strain>SC-B67</strain>
    </source>
</reference>
<protein>
    <recommendedName>
        <fullName evidence="2">Probable Fe(2+)-trafficking protein</fullName>
    </recommendedName>
</protein>
<comment type="function">
    <text evidence="2">Could be a mediator in iron transactions between iron acquisition and iron-requiring processes, such as synthesis and/or repair of Fe-S clusters in biosynthetic enzymes.</text>
</comment>
<comment type="subunit">
    <text evidence="2">Monomer.</text>
</comment>
<comment type="similarity">
    <text evidence="2">Belongs to the Fe(2+)-trafficking protein family.</text>
</comment>
<proteinExistence type="inferred from homology"/>
<organism>
    <name type="scientific">Salmonella choleraesuis (strain SC-B67)</name>
    <dbReference type="NCBI Taxonomy" id="321314"/>
    <lineage>
        <taxon>Bacteria</taxon>
        <taxon>Pseudomonadati</taxon>
        <taxon>Pseudomonadota</taxon>
        <taxon>Gammaproteobacteria</taxon>
        <taxon>Enterobacterales</taxon>
        <taxon>Enterobacteriaceae</taxon>
        <taxon>Salmonella</taxon>
    </lineage>
</organism>
<feature type="initiator methionine" description="Removed" evidence="1">
    <location>
        <position position="1"/>
    </location>
</feature>
<feature type="chain" id="PRO_0000214502" description="Probable Fe(2+)-trafficking protein">
    <location>
        <begin position="2"/>
        <end position="91"/>
    </location>
</feature>
<evidence type="ECO:0000250" key="1"/>
<evidence type="ECO:0000255" key="2">
    <source>
        <dbReference type="HAMAP-Rule" id="MF_00686"/>
    </source>
</evidence>